<keyword id="KW-1015">Disulfide bond</keyword>
<keyword id="KW-0872">Ion channel impairing toxin</keyword>
<keyword id="KW-0528">Neurotoxin</keyword>
<keyword id="KW-0964">Secreted</keyword>
<keyword id="KW-0800">Toxin</keyword>
<dbReference type="GO" id="GO:0005576">
    <property type="term" value="C:extracellular region"/>
    <property type="evidence" value="ECO:0007669"/>
    <property type="project" value="UniProtKB-SubCell"/>
</dbReference>
<dbReference type="GO" id="GO:0099106">
    <property type="term" value="F:ion channel regulator activity"/>
    <property type="evidence" value="ECO:0007669"/>
    <property type="project" value="UniProtKB-KW"/>
</dbReference>
<dbReference type="GO" id="GO:0090729">
    <property type="term" value="F:toxin activity"/>
    <property type="evidence" value="ECO:0007669"/>
    <property type="project" value="UniProtKB-KW"/>
</dbReference>
<accession>P0DKN7</accession>
<organism>
    <name type="scientific">Iotyrris olangoensis</name>
    <name type="common">Sea snail</name>
    <name type="synonym">Lophiotoma olangoensis</name>
    <dbReference type="NCBI Taxonomy" id="2420066"/>
    <lineage>
        <taxon>Eukaryota</taxon>
        <taxon>Metazoa</taxon>
        <taxon>Spiralia</taxon>
        <taxon>Lophotrochozoa</taxon>
        <taxon>Mollusca</taxon>
        <taxon>Gastropoda</taxon>
        <taxon>Caenogastropoda</taxon>
        <taxon>Neogastropoda</taxon>
        <taxon>Conoidea</taxon>
        <taxon>Turridae</taxon>
        <taxon>Iotyrris</taxon>
    </lineage>
</organism>
<evidence type="ECO:0000250" key="1"/>
<protein>
    <recommendedName>
        <fullName>Turripeptide OL49</fullName>
    </recommendedName>
</protein>
<comment type="function">
    <text evidence="1">Acts as a neurotoxin by inhibiting an ion channel.</text>
</comment>
<comment type="subcellular location">
    <subcellularLocation>
        <location evidence="1">Secreted</location>
    </subcellularLocation>
</comment>
<comment type="tissue specificity">
    <text>Expressed by the venom duct.</text>
</comment>
<comment type="domain">
    <text>The cysteine framework is C-CC-CC-C.</text>
</comment>
<comment type="PTM">
    <text evidence="1">Contains 3 disulfide bonds.</text>
</comment>
<sequence length="26" mass="2737">LLCISCCVSITECCQLMSGCAVEIKS</sequence>
<reference key="1">
    <citation type="journal article" date="2006" name="J. Mol. Evol.">
        <title>Genes expressed in a turrid venom duct: divergence and similarity to conotoxins.</title>
        <authorList>
            <person name="Watkins M."/>
            <person name="Hillyard D.R."/>
            <person name="Olivera B.M."/>
        </authorList>
    </citation>
    <scope>NUCLEOTIDE SEQUENCE [MRNA]</scope>
    <source>
        <tissue>Venom duct</tissue>
    </source>
</reference>
<proteinExistence type="evidence at transcript level"/>
<feature type="peptide" id="PRO_0000419853" description="Turripeptide OL49">
    <location>
        <begin position="1"/>
        <end position="26"/>
    </location>
</feature>
<name>TU49_IOTOL</name>